<gene>
    <name type="primary">OR56A5</name>
    <name type="synonym">OR56A5P</name>
</gene>
<feature type="chain" id="PRO_0000343673" description="Olfactory receptor 56A5">
    <location>
        <begin position="1"/>
        <end position="313"/>
    </location>
</feature>
<feature type="topological domain" description="Extracellular" evidence="1">
    <location>
        <begin position="1"/>
        <end position="33"/>
    </location>
</feature>
<feature type="transmembrane region" description="Helical; Name=1" evidence="1">
    <location>
        <begin position="34"/>
        <end position="54"/>
    </location>
</feature>
<feature type="topological domain" description="Cytoplasmic" evidence="1">
    <location>
        <begin position="55"/>
        <end position="67"/>
    </location>
</feature>
<feature type="transmembrane region" description="Helical; Name=2" evidence="1">
    <location>
        <begin position="68"/>
        <end position="88"/>
    </location>
</feature>
<feature type="topological domain" description="Extracellular" evidence="1">
    <location>
        <begin position="89"/>
        <end position="100"/>
    </location>
</feature>
<feature type="transmembrane region" description="Helical; Name=3" evidence="1">
    <location>
        <begin position="101"/>
        <end position="121"/>
    </location>
</feature>
<feature type="topological domain" description="Cytoplasmic" evidence="1">
    <location>
        <begin position="122"/>
        <end position="146"/>
    </location>
</feature>
<feature type="transmembrane region" description="Helical; Name=4" evidence="1">
    <location>
        <begin position="147"/>
        <end position="167"/>
    </location>
</feature>
<feature type="topological domain" description="Extracellular" evidence="1">
    <location>
        <begin position="168"/>
        <end position="203"/>
    </location>
</feature>
<feature type="transmembrane region" description="Helical; Name=5" evidence="1">
    <location>
        <begin position="204"/>
        <end position="224"/>
    </location>
</feature>
<feature type="topological domain" description="Cytoplasmic" evidence="1">
    <location>
        <begin position="225"/>
        <end position="246"/>
    </location>
</feature>
<feature type="transmembrane region" description="Helical; Name=6" evidence="1">
    <location>
        <begin position="247"/>
        <end position="267"/>
    </location>
</feature>
<feature type="topological domain" description="Extracellular" evidence="1">
    <location>
        <begin position="268"/>
        <end position="276"/>
    </location>
</feature>
<feature type="transmembrane region" description="Helical; Name=7" evidence="1">
    <location>
        <begin position="277"/>
        <end position="297"/>
    </location>
</feature>
<feature type="topological domain" description="Cytoplasmic" evidence="1">
    <location>
        <begin position="298"/>
        <end position="313"/>
    </location>
</feature>
<feature type="glycosylation site" description="N-linked (GlcNAc...) asparagine" evidence="1">
    <location>
        <position position="6"/>
    </location>
</feature>
<feature type="glycosylation site" description="N-linked (GlcNAc...) asparagine" evidence="1">
    <location>
        <position position="7"/>
    </location>
</feature>
<feature type="glycosylation site" description="N-linked (GlcNAc...) asparagine" evidence="1">
    <location>
        <position position="184"/>
    </location>
</feature>
<feature type="glycosylation site" description="N-linked (GlcNAc...) asparagine" evidence="1">
    <location>
        <position position="198"/>
    </location>
</feature>
<feature type="disulfide bond" evidence="2">
    <location>
        <begin position="100"/>
        <end position="182"/>
    </location>
</feature>
<sequence length="313" mass="35317">MTLPSNNSTSPVFEFFLICFPSFQSWQHWLSLPLSLLFLLAMGANATLLITIYLEASLHQPLYYLLSLLSLLDIVLCLTVIPKVLAIFWFDLRSISFPACFLQVFIMNSFLTMESCTFMIMAYDRYVAICKPLQYSSIITDQFVARAAIFVVARNGLLTMPIPILSSRLRYCAGHIIKNCICTNVSVSKLSCDDITLNQSYQFVIGWTLLGSDLILIVLSYFFILKTVLRIKGEGDMAKALGTCGSHFILILFFTTVLLVLVITNLARKRIPPDVPILLNILHHLIPPALNPIVYGVRTKEIKQGIQNLLRRL</sequence>
<protein>
    <recommendedName>
        <fullName>Olfactory receptor 56A5</fullName>
    </recommendedName>
</protein>
<reference key="1">
    <citation type="journal article" date="2006" name="Nature">
        <title>Human chromosome 11 DNA sequence and analysis including novel gene identification.</title>
        <authorList>
            <person name="Taylor T.D."/>
            <person name="Noguchi H."/>
            <person name="Totoki Y."/>
            <person name="Toyoda A."/>
            <person name="Kuroki Y."/>
            <person name="Dewar K."/>
            <person name="Lloyd C."/>
            <person name="Itoh T."/>
            <person name="Takeda T."/>
            <person name="Kim D.-W."/>
            <person name="She X."/>
            <person name="Barlow K.F."/>
            <person name="Bloom T."/>
            <person name="Bruford E."/>
            <person name="Chang J.L."/>
            <person name="Cuomo C.A."/>
            <person name="Eichler E."/>
            <person name="FitzGerald M.G."/>
            <person name="Jaffe D.B."/>
            <person name="LaButti K."/>
            <person name="Nicol R."/>
            <person name="Park H.-S."/>
            <person name="Seaman C."/>
            <person name="Sougnez C."/>
            <person name="Yang X."/>
            <person name="Zimmer A.R."/>
            <person name="Zody M.C."/>
            <person name="Birren B.W."/>
            <person name="Nusbaum C."/>
            <person name="Fujiyama A."/>
            <person name="Hattori M."/>
            <person name="Rogers J."/>
            <person name="Lander E.S."/>
            <person name="Sakaki Y."/>
        </authorList>
    </citation>
    <scope>NUCLEOTIDE SEQUENCE [LARGE SCALE GENOMIC DNA]</scope>
</reference>
<keyword id="KW-1003">Cell membrane</keyword>
<keyword id="KW-1015">Disulfide bond</keyword>
<keyword id="KW-0297">G-protein coupled receptor</keyword>
<keyword id="KW-0325">Glycoprotein</keyword>
<keyword id="KW-0472">Membrane</keyword>
<keyword id="KW-0552">Olfaction</keyword>
<keyword id="KW-0675">Receptor</keyword>
<keyword id="KW-1185">Reference proteome</keyword>
<keyword id="KW-0716">Sensory transduction</keyword>
<keyword id="KW-0807">Transducer</keyword>
<keyword id="KW-0812">Transmembrane</keyword>
<keyword id="KW-1133">Transmembrane helix</keyword>
<evidence type="ECO:0000255" key="1"/>
<evidence type="ECO:0000255" key="2">
    <source>
        <dbReference type="PROSITE-ProRule" id="PRU00521"/>
    </source>
</evidence>
<evidence type="ECO:0000305" key="3"/>
<name>O56A5_HUMAN</name>
<proteinExistence type="inferred from homology"/>
<dbReference type="EMBL" id="AC025016">
    <property type="status" value="NOT_ANNOTATED_CDS"/>
    <property type="molecule type" value="Genomic_DNA"/>
</dbReference>
<dbReference type="CCDS" id="CCDS73248.1"/>
<dbReference type="RefSeq" id="NP_001139505.1">
    <property type="nucleotide sequence ID" value="NM_001146033.1"/>
</dbReference>
<dbReference type="SMR" id="P0C7T3"/>
<dbReference type="FunCoup" id="P0C7T3">
    <property type="interactions" value="420"/>
</dbReference>
<dbReference type="STRING" id="9606.ENSP00000481594"/>
<dbReference type="GlyCosmos" id="P0C7T3">
    <property type="glycosylation" value="4 sites, No reported glycans"/>
</dbReference>
<dbReference type="GlyGen" id="P0C7T3">
    <property type="glycosylation" value="4 sites"/>
</dbReference>
<dbReference type="BioMuta" id="OR56A5"/>
<dbReference type="DMDM" id="206557833"/>
<dbReference type="PaxDb" id="9606-ENSP00000481594"/>
<dbReference type="Antibodypedia" id="79119">
    <property type="antibodies" value="1 antibodies from 1 providers"/>
</dbReference>
<dbReference type="DNASU" id="390084"/>
<dbReference type="Ensembl" id="ENST00000532411.2">
    <property type="protein sequence ID" value="ENSP00000481594.1"/>
    <property type="gene ID" value="ENSG00000188691.6"/>
</dbReference>
<dbReference type="GeneID" id="390084"/>
<dbReference type="KEGG" id="hsa:390084"/>
<dbReference type="MANE-Select" id="ENST00000532411.2">
    <property type="protein sequence ID" value="ENSP00000481594.1"/>
    <property type="RefSeq nucleotide sequence ID" value="NM_001146033.1"/>
    <property type="RefSeq protein sequence ID" value="NP_001139505.1"/>
</dbReference>
<dbReference type="UCSC" id="uc010qzu.2">
    <property type="organism name" value="human"/>
</dbReference>
<dbReference type="AGR" id="HGNC:14792"/>
<dbReference type="CTD" id="390084"/>
<dbReference type="DisGeNET" id="390084"/>
<dbReference type="GeneCards" id="OR56A5"/>
<dbReference type="HGNC" id="HGNC:14792">
    <property type="gene designation" value="OR56A5"/>
</dbReference>
<dbReference type="HPA" id="ENSG00000188691">
    <property type="expression patterns" value="Not detected"/>
</dbReference>
<dbReference type="neXtProt" id="NX_P0C7T3"/>
<dbReference type="PharmGKB" id="PA32447"/>
<dbReference type="VEuPathDB" id="HostDB:ENSG00000188691"/>
<dbReference type="eggNOG" id="ENOG502SJUD">
    <property type="taxonomic scope" value="Eukaryota"/>
</dbReference>
<dbReference type="GeneTree" id="ENSGT00940000162834"/>
<dbReference type="InParanoid" id="P0C7T3"/>
<dbReference type="OMA" id="TFIMARN"/>
<dbReference type="OrthoDB" id="5969463at2759"/>
<dbReference type="PAN-GO" id="P0C7T3">
    <property type="GO annotations" value="2 GO annotations based on evolutionary models"/>
</dbReference>
<dbReference type="PhylomeDB" id="P0C7T3"/>
<dbReference type="PathwayCommons" id="P0C7T3"/>
<dbReference type="Reactome" id="R-HSA-9752946">
    <property type="pathway name" value="Expression and translocation of olfactory receptors"/>
</dbReference>
<dbReference type="BioGRID-ORCS" id="390084">
    <property type="hits" value="10 hits in 232 CRISPR screens"/>
</dbReference>
<dbReference type="GenomeRNAi" id="390084"/>
<dbReference type="Pharos" id="P0C7T3">
    <property type="development level" value="Tdark"/>
</dbReference>
<dbReference type="PRO" id="PR:P0C7T3"/>
<dbReference type="Proteomes" id="UP000005640">
    <property type="component" value="Chromosome 11"/>
</dbReference>
<dbReference type="RNAct" id="P0C7T3">
    <property type="molecule type" value="protein"/>
</dbReference>
<dbReference type="Bgee" id="ENSG00000188691">
    <property type="expression patterns" value="Expressed in blood and 2 other cell types or tissues"/>
</dbReference>
<dbReference type="ExpressionAtlas" id="P0C7T3">
    <property type="expression patterns" value="baseline and differential"/>
</dbReference>
<dbReference type="GO" id="GO:0005886">
    <property type="term" value="C:plasma membrane"/>
    <property type="evidence" value="ECO:0000318"/>
    <property type="project" value="GO_Central"/>
</dbReference>
<dbReference type="GO" id="GO:0004930">
    <property type="term" value="F:G protein-coupled receptor activity"/>
    <property type="evidence" value="ECO:0007669"/>
    <property type="project" value="UniProtKB-KW"/>
</dbReference>
<dbReference type="GO" id="GO:0004984">
    <property type="term" value="F:olfactory receptor activity"/>
    <property type="evidence" value="ECO:0000318"/>
    <property type="project" value="GO_Central"/>
</dbReference>
<dbReference type="FunFam" id="1.20.1070.10:FF:000002">
    <property type="entry name" value="Olfactory receptor"/>
    <property type="match status" value="1"/>
</dbReference>
<dbReference type="Gene3D" id="1.20.1070.10">
    <property type="entry name" value="Rhodopsin 7-helix transmembrane proteins"/>
    <property type="match status" value="1"/>
</dbReference>
<dbReference type="InterPro" id="IPR000276">
    <property type="entry name" value="GPCR_Rhodpsn"/>
</dbReference>
<dbReference type="InterPro" id="IPR017452">
    <property type="entry name" value="GPCR_Rhodpsn_7TM"/>
</dbReference>
<dbReference type="InterPro" id="IPR000725">
    <property type="entry name" value="Olfact_rcpt"/>
</dbReference>
<dbReference type="InterPro" id="IPR050402">
    <property type="entry name" value="OR51/52/56-like"/>
</dbReference>
<dbReference type="PANTHER" id="PTHR26450:SF424">
    <property type="entry name" value="OLFACTORY RECEPTOR 56A5"/>
    <property type="match status" value="1"/>
</dbReference>
<dbReference type="PANTHER" id="PTHR26450">
    <property type="entry name" value="OLFACTORY RECEPTOR 56B1-RELATED"/>
    <property type="match status" value="1"/>
</dbReference>
<dbReference type="Pfam" id="PF13853">
    <property type="entry name" value="7tm_4"/>
    <property type="match status" value="1"/>
</dbReference>
<dbReference type="PRINTS" id="PR00237">
    <property type="entry name" value="GPCRRHODOPSN"/>
</dbReference>
<dbReference type="PRINTS" id="PR00245">
    <property type="entry name" value="OLFACTORYR"/>
</dbReference>
<dbReference type="SUPFAM" id="SSF81321">
    <property type="entry name" value="Family A G protein-coupled receptor-like"/>
    <property type="match status" value="1"/>
</dbReference>
<dbReference type="PROSITE" id="PS50262">
    <property type="entry name" value="G_PROTEIN_RECEP_F1_2"/>
    <property type="match status" value="1"/>
</dbReference>
<comment type="function">
    <text evidence="3">Odorant receptor.</text>
</comment>
<comment type="subcellular location">
    <subcellularLocation>
        <location>Cell membrane</location>
        <topology>Multi-pass membrane protein</topology>
    </subcellularLocation>
</comment>
<comment type="similarity">
    <text evidence="2">Belongs to the G-protein coupled receptor 1 family.</text>
</comment>
<comment type="online information" name="Human Olfactory Receptor Data Exploratorium (HORDE)">
    <link uri="http://genome.weizmann.ac.il/horde/card/index/symbol:OR56A5"/>
</comment>
<organism>
    <name type="scientific">Homo sapiens</name>
    <name type="common">Human</name>
    <dbReference type="NCBI Taxonomy" id="9606"/>
    <lineage>
        <taxon>Eukaryota</taxon>
        <taxon>Metazoa</taxon>
        <taxon>Chordata</taxon>
        <taxon>Craniata</taxon>
        <taxon>Vertebrata</taxon>
        <taxon>Euteleostomi</taxon>
        <taxon>Mammalia</taxon>
        <taxon>Eutheria</taxon>
        <taxon>Euarchontoglires</taxon>
        <taxon>Primates</taxon>
        <taxon>Haplorrhini</taxon>
        <taxon>Catarrhini</taxon>
        <taxon>Hominidae</taxon>
        <taxon>Homo</taxon>
    </lineage>
</organism>
<accession>P0C7T3</accession>